<reference key="1">
    <citation type="journal article" date="2002" name="DNA Res.">
        <title>Complete genome structure of the thermophilic cyanobacterium Thermosynechococcus elongatus BP-1.</title>
        <authorList>
            <person name="Nakamura Y."/>
            <person name="Kaneko T."/>
            <person name="Sato S."/>
            <person name="Ikeuchi M."/>
            <person name="Katoh H."/>
            <person name="Sasamoto S."/>
            <person name="Watanabe A."/>
            <person name="Iriguchi M."/>
            <person name="Kawashima K."/>
            <person name="Kimura T."/>
            <person name="Kishida Y."/>
            <person name="Kiyokawa C."/>
            <person name="Kohara M."/>
            <person name="Matsumoto M."/>
            <person name="Matsuno A."/>
            <person name="Nakazaki N."/>
            <person name="Shimpo S."/>
            <person name="Sugimoto M."/>
            <person name="Takeuchi C."/>
            <person name="Yamada M."/>
            <person name="Tabata S."/>
        </authorList>
    </citation>
    <scope>NUCLEOTIDE SEQUENCE [LARGE SCALE GENOMIC DNA]</scope>
    <source>
        <strain>NIES-2133 / IAM M-273 / BP-1</strain>
    </source>
</reference>
<comment type="function">
    <text evidence="1">Catalyzes the hydrolysis of 1,4-dihydroxy-2-naphthoyl-CoA (DHNA-CoA) to 1,4-dihydroxy-2-naphthoate (DHNA), a reaction involved in phylloquinone (vitamin K1) biosynthesis.</text>
</comment>
<comment type="catalytic activity">
    <reaction evidence="1">
        <text>1,4-dihydroxy-2-naphthoyl-CoA + H2O = 1,4-dihydroxy-2-naphthoate + CoA + H(+)</text>
        <dbReference type="Rhea" id="RHEA:26309"/>
        <dbReference type="ChEBI" id="CHEBI:11173"/>
        <dbReference type="ChEBI" id="CHEBI:15377"/>
        <dbReference type="ChEBI" id="CHEBI:15378"/>
        <dbReference type="ChEBI" id="CHEBI:57287"/>
        <dbReference type="ChEBI" id="CHEBI:58897"/>
        <dbReference type="EC" id="3.1.2.28"/>
    </reaction>
</comment>
<comment type="pathway">
    <text evidence="1">Cofactor biosynthesis; phylloquinone biosynthesis.</text>
</comment>
<comment type="pathway">
    <text evidence="1">Quinol/quinone metabolism; 1,4-dihydroxy-2-naphthoate biosynthesis; 1,4-dihydroxy-2-naphthoate from chorismate: step 7/7.</text>
</comment>
<comment type="similarity">
    <text evidence="1">Belongs to the 4-hydroxybenzoyl-CoA thioesterase family. DHNA-CoA hydrolase subfamily.</text>
</comment>
<proteinExistence type="inferred from homology"/>
<gene>
    <name type="ordered locus">tll0488</name>
</gene>
<sequence>MNPTPLRDYQRTVHFADTDAAGVVYFANLLRFCHEAYEDALAQLGVDLRQFFSNSGLIVPITEAQIRFLKPLYCGDRLRVTIDPQRLDTSRFQLTYTLYNEGGDRVAIAQTQHMCLQLPHRQRVPIPDPLPAWLKSAPEEASDRED</sequence>
<evidence type="ECO:0000255" key="1">
    <source>
        <dbReference type="HAMAP-Rule" id="MF_02101"/>
    </source>
</evidence>
<dbReference type="EC" id="3.1.2.28" evidence="1"/>
<dbReference type="EMBL" id="BA000039">
    <property type="protein sequence ID" value="BAC08040.1"/>
    <property type="molecule type" value="Genomic_DNA"/>
</dbReference>
<dbReference type="RefSeq" id="NP_681278.1">
    <property type="nucleotide sequence ID" value="NC_004113.1"/>
</dbReference>
<dbReference type="SMR" id="Q8DLK3"/>
<dbReference type="STRING" id="197221.gene:10747077"/>
<dbReference type="EnsemblBacteria" id="BAC08040">
    <property type="protein sequence ID" value="BAC08040"/>
    <property type="gene ID" value="BAC08040"/>
</dbReference>
<dbReference type="KEGG" id="tel:tll0488"/>
<dbReference type="PATRIC" id="fig|197221.4.peg.513"/>
<dbReference type="eggNOG" id="COG0824">
    <property type="taxonomic scope" value="Bacteria"/>
</dbReference>
<dbReference type="UniPathway" id="UPA00995"/>
<dbReference type="UniPathway" id="UPA01057">
    <property type="reaction ID" value="UER01033"/>
</dbReference>
<dbReference type="Proteomes" id="UP000000440">
    <property type="component" value="Chromosome"/>
</dbReference>
<dbReference type="GO" id="GO:0061522">
    <property type="term" value="F:1,4-dihydroxy-2-naphthoyl-CoA thioesterase activity"/>
    <property type="evidence" value="ECO:0007669"/>
    <property type="project" value="UniProtKB-EC"/>
</dbReference>
<dbReference type="GO" id="GO:0047617">
    <property type="term" value="F:fatty acyl-CoA hydrolase activity"/>
    <property type="evidence" value="ECO:0007669"/>
    <property type="project" value="TreeGrafter"/>
</dbReference>
<dbReference type="GO" id="GO:0042372">
    <property type="term" value="P:phylloquinone biosynthetic process"/>
    <property type="evidence" value="ECO:0007669"/>
    <property type="project" value="UniProtKB-UniRule"/>
</dbReference>
<dbReference type="CDD" id="cd00586">
    <property type="entry name" value="4HBT"/>
    <property type="match status" value="1"/>
</dbReference>
<dbReference type="Gene3D" id="3.10.129.10">
    <property type="entry name" value="Hotdog Thioesterase"/>
    <property type="match status" value="1"/>
</dbReference>
<dbReference type="HAMAP" id="MF_02101">
    <property type="entry name" value="DHNA_CoA_hydrolase"/>
    <property type="match status" value="1"/>
</dbReference>
<dbReference type="InterPro" id="IPR050563">
    <property type="entry name" value="4-hydroxybenzoyl-CoA_TE"/>
</dbReference>
<dbReference type="InterPro" id="IPR022829">
    <property type="entry name" value="DHNA_CoA_hydrolase"/>
</dbReference>
<dbReference type="InterPro" id="IPR029069">
    <property type="entry name" value="HotDog_dom_sf"/>
</dbReference>
<dbReference type="InterPro" id="IPR006684">
    <property type="entry name" value="YbgC/YbaW"/>
</dbReference>
<dbReference type="PANTHER" id="PTHR31793">
    <property type="entry name" value="4-HYDROXYBENZOYL-COA THIOESTERASE FAMILY MEMBER"/>
    <property type="match status" value="1"/>
</dbReference>
<dbReference type="PANTHER" id="PTHR31793:SF37">
    <property type="entry name" value="ACYL-COA THIOESTER HYDROLASE YBGC"/>
    <property type="match status" value="1"/>
</dbReference>
<dbReference type="Pfam" id="PF13279">
    <property type="entry name" value="4HBT_2"/>
    <property type="match status" value="1"/>
</dbReference>
<dbReference type="PIRSF" id="PIRSF003230">
    <property type="entry name" value="YbgC"/>
    <property type="match status" value="1"/>
</dbReference>
<dbReference type="SUPFAM" id="SSF54637">
    <property type="entry name" value="Thioesterase/thiol ester dehydrase-isomerase"/>
    <property type="match status" value="1"/>
</dbReference>
<feature type="chain" id="PRO_0000377036" description="1,4-dihydroxy-2-naphthoyl-CoA hydrolase">
    <location>
        <begin position="1"/>
        <end position="146"/>
    </location>
</feature>
<feature type="active site" evidence="1">
    <location>
        <position position="19"/>
    </location>
</feature>
<accession>Q8DLK3</accession>
<keyword id="KW-0378">Hydrolase</keyword>
<keyword id="KW-1185">Reference proteome</keyword>
<organism>
    <name type="scientific">Thermosynechococcus vestitus (strain NIES-2133 / IAM M-273 / BP-1)</name>
    <dbReference type="NCBI Taxonomy" id="197221"/>
    <lineage>
        <taxon>Bacteria</taxon>
        <taxon>Bacillati</taxon>
        <taxon>Cyanobacteriota</taxon>
        <taxon>Cyanophyceae</taxon>
        <taxon>Acaryochloridales</taxon>
        <taxon>Thermosynechococcaceae</taxon>
        <taxon>Thermosynechococcus</taxon>
    </lineage>
</organism>
<name>DNCH_THEVB</name>
<protein>
    <recommendedName>
        <fullName evidence="1">1,4-dihydroxy-2-naphthoyl-CoA hydrolase</fullName>
        <shortName evidence="1">DHNA-CoA hydrolase</shortName>
        <ecNumber evidence="1">3.1.2.28</ecNumber>
    </recommendedName>
    <alternativeName>
        <fullName evidence="1">DHNA-CoA thioesterase</fullName>
    </alternativeName>
</protein>